<proteinExistence type="inferred from homology"/>
<gene>
    <name evidence="1" type="primary">coaA</name>
    <name type="ordered locus">Spy49_0977</name>
</gene>
<reference key="1">
    <citation type="journal article" date="2008" name="J. Bacteriol.">
        <title>Genome sequence of a nephritogenic and highly transformable M49 strain of Streptococcus pyogenes.</title>
        <authorList>
            <person name="McShan W.M."/>
            <person name="Ferretti J.J."/>
            <person name="Karasawa T."/>
            <person name="Suvorov A.N."/>
            <person name="Lin S."/>
            <person name="Qin B."/>
            <person name="Jia H."/>
            <person name="Kenton S."/>
            <person name="Najar F."/>
            <person name="Wu H."/>
            <person name="Scott J."/>
            <person name="Roe B.A."/>
            <person name="Savic D.J."/>
        </authorList>
    </citation>
    <scope>NUCLEOTIDE SEQUENCE [LARGE SCALE GENOMIC DNA]</scope>
    <source>
        <strain>NZ131</strain>
    </source>
</reference>
<protein>
    <recommendedName>
        <fullName evidence="1">Pantothenate kinase</fullName>
        <ecNumber evidence="1">2.7.1.33</ecNumber>
    </recommendedName>
    <alternativeName>
        <fullName evidence="1">Pantothenic acid kinase</fullName>
    </alternativeName>
</protein>
<evidence type="ECO:0000255" key="1">
    <source>
        <dbReference type="HAMAP-Rule" id="MF_00215"/>
    </source>
</evidence>
<keyword id="KW-0067">ATP-binding</keyword>
<keyword id="KW-0173">Coenzyme A biosynthesis</keyword>
<keyword id="KW-0963">Cytoplasm</keyword>
<keyword id="KW-0418">Kinase</keyword>
<keyword id="KW-0547">Nucleotide-binding</keyword>
<keyword id="KW-0808">Transferase</keyword>
<comment type="catalytic activity">
    <reaction evidence="1">
        <text>(R)-pantothenate + ATP = (R)-4'-phosphopantothenate + ADP + H(+)</text>
        <dbReference type="Rhea" id="RHEA:16373"/>
        <dbReference type="ChEBI" id="CHEBI:10986"/>
        <dbReference type="ChEBI" id="CHEBI:15378"/>
        <dbReference type="ChEBI" id="CHEBI:29032"/>
        <dbReference type="ChEBI" id="CHEBI:30616"/>
        <dbReference type="ChEBI" id="CHEBI:456216"/>
        <dbReference type="EC" id="2.7.1.33"/>
    </reaction>
</comment>
<comment type="pathway">
    <text evidence="1">Cofactor biosynthesis; coenzyme A biosynthesis; CoA from (R)-pantothenate: step 1/5.</text>
</comment>
<comment type="subcellular location">
    <subcellularLocation>
        <location evidence="1">Cytoplasm</location>
    </subcellularLocation>
</comment>
<comment type="similarity">
    <text evidence="1">Belongs to the prokaryotic pantothenate kinase family.</text>
</comment>
<feature type="chain" id="PRO_1000099958" description="Pantothenate kinase">
    <location>
        <begin position="1"/>
        <end position="306"/>
    </location>
</feature>
<feature type="binding site" evidence="1">
    <location>
        <begin position="91"/>
        <end position="98"/>
    </location>
    <ligand>
        <name>ATP</name>
        <dbReference type="ChEBI" id="CHEBI:30616"/>
    </ligand>
</feature>
<sequence>MSNEFITFEKISRESWKTLHQKAKALLTQEELKSITSLNDNISINDVIDIYLPLINLIQVYKIAQENLSFSKSLFLKKDIQLRPFIIGISGSVAVGKSTTSRLLQLLLSRTHPNSQVELVTTDGFLYPNQFLIEQGLLNRKGFPESYNMELLLDFLDSIKNGQTAFAPVYSHDIYDIIPNKKQSFNNPDFLIVEGINVFQNQQNNRLYMSDYFDFSIYIDADSSHIETWYIERFLSILKLAKRDPHNYYAQYAQLPRSEAIAFARNVWKTVNLENLEKFIEPTRNRAELILHKSADHKIDEIYLKK</sequence>
<organism>
    <name type="scientific">Streptococcus pyogenes serotype M49 (strain NZ131)</name>
    <dbReference type="NCBI Taxonomy" id="471876"/>
    <lineage>
        <taxon>Bacteria</taxon>
        <taxon>Bacillati</taxon>
        <taxon>Bacillota</taxon>
        <taxon>Bacilli</taxon>
        <taxon>Lactobacillales</taxon>
        <taxon>Streptococcaceae</taxon>
        <taxon>Streptococcus</taxon>
    </lineage>
</organism>
<name>COAA_STRPZ</name>
<dbReference type="EC" id="2.7.1.33" evidence="1"/>
<dbReference type="EMBL" id="CP000829">
    <property type="protein sequence ID" value="ACI61277.1"/>
    <property type="molecule type" value="Genomic_DNA"/>
</dbReference>
<dbReference type="SMR" id="B5XLR5"/>
<dbReference type="KEGG" id="soz:Spy49_0977"/>
<dbReference type="HOGENOM" id="CLU_053818_1_1_9"/>
<dbReference type="UniPathway" id="UPA00241">
    <property type="reaction ID" value="UER00352"/>
</dbReference>
<dbReference type="Proteomes" id="UP000001039">
    <property type="component" value="Chromosome"/>
</dbReference>
<dbReference type="GO" id="GO:0005737">
    <property type="term" value="C:cytoplasm"/>
    <property type="evidence" value="ECO:0007669"/>
    <property type="project" value="UniProtKB-SubCell"/>
</dbReference>
<dbReference type="GO" id="GO:0005524">
    <property type="term" value="F:ATP binding"/>
    <property type="evidence" value="ECO:0007669"/>
    <property type="project" value="UniProtKB-UniRule"/>
</dbReference>
<dbReference type="GO" id="GO:0004594">
    <property type="term" value="F:pantothenate kinase activity"/>
    <property type="evidence" value="ECO:0007669"/>
    <property type="project" value="UniProtKB-UniRule"/>
</dbReference>
<dbReference type="GO" id="GO:0015937">
    <property type="term" value="P:coenzyme A biosynthetic process"/>
    <property type="evidence" value="ECO:0007669"/>
    <property type="project" value="UniProtKB-UniRule"/>
</dbReference>
<dbReference type="CDD" id="cd02025">
    <property type="entry name" value="PanK"/>
    <property type="match status" value="1"/>
</dbReference>
<dbReference type="Gene3D" id="3.40.50.300">
    <property type="entry name" value="P-loop containing nucleotide triphosphate hydrolases"/>
    <property type="match status" value="1"/>
</dbReference>
<dbReference type="HAMAP" id="MF_00215">
    <property type="entry name" value="Pantothen_kinase_1"/>
    <property type="match status" value="1"/>
</dbReference>
<dbReference type="InterPro" id="IPR027417">
    <property type="entry name" value="P-loop_NTPase"/>
</dbReference>
<dbReference type="InterPro" id="IPR004566">
    <property type="entry name" value="PanK"/>
</dbReference>
<dbReference type="InterPro" id="IPR006083">
    <property type="entry name" value="PRK/URK"/>
</dbReference>
<dbReference type="NCBIfam" id="TIGR00554">
    <property type="entry name" value="panK_bact"/>
    <property type="match status" value="1"/>
</dbReference>
<dbReference type="PANTHER" id="PTHR10285">
    <property type="entry name" value="URIDINE KINASE"/>
    <property type="match status" value="1"/>
</dbReference>
<dbReference type="Pfam" id="PF00485">
    <property type="entry name" value="PRK"/>
    <property type="match status" value="1"/>
</dbReference>
<dbReference type="PIRSF" id="PIRSF000545">
    <property type="entry name" value="Pantothenate_kin"/>
    <property type="match status" value="1"/>
</dbReference>
<dbReference type="SUPFAM" id="SSF52540">
    <property type="entry name" value="P-loop containing nucleoside triphosphate hydrolases"/>
    <property type="match status" value="1"/>
</dbReference>
<accession>B5XLR5</accession>